<gene>
    <name evidence="2" type="primary">acpS</name>
    <name type="ordered locus">c3087</name>
</gene>
<protein>
    <recommendedName>
        <fullName evidence="2">Holo-[acyl-carrier-protein] synthase</fullName>
        <shortName evidence="2">Holo-ACP synthase</shortName>
        <ecNumber evidence="2">2.7.8.7</ecNumber>
    </recommendedName>
    <alternativeName>
        <fullName evidence="2">4'-phosphopantetheinyl transferase AcpS</fullName>
    </alternativeName>
</protein>
<keyword id="KW-0963">Cytoplasm</keyword>
<keyword id="KW-0275">Fatty acid biosynthesis</keyword>
<keyword id="KW-0276">Fatty acid metabolism</keyword>
<keyword id="KW-0444">Lipid biosynthesis</keyword>
<keyword id="KW-0443">Lipid metabolism</keyword>
<keyword id="KW-0460">Magnesium</keyword>
<keyword id="KW-0479">Metal-binding</keyword>
<keyword id="KW-1185">Reference proteome</keyword>
<keyword id="KW-0808">Transferase</keyword>
<dbReference type="EC" id="2.7.8.7" evidence="2"/>
<dbReference type="EMBL" id="AE014075">
    <property type="protein sequence ID" value="AAN81536.1"/>
    <property type="molecule type" value="Genomic_DNA"/>
</dbReference>
<dbReference type="RefSeq" id="WP_000986038.1">
    <property type="nucleotide sequence ID" value="NZ_CP051263.1"/>
</dbReference>
<dbReference type="SMR" id="Q8FF19"/>
<dbReference type="STRING" id="199310.c3087"/>
<dbReference type="KEGG" id="ecc:c3087"/>
<dbReference type="eggNOG" id="COG0736">
    <property type="taxonomic scope" value="Bacteria"/>
</dbReference>
<dbReference type="HOGENOM" id="CLU_089696_3_1_6"/>
<dbReference type="BioCyc" id="ECOL199310:C3087-MONOMER"/>
<dbReference type="Proteomes" id="UP000001410">
    <property type="component" value="Chromosome"/>
</dbReference>
<dbReference type="GO" id="GO:0005737">
    <property type="term" value="C:cytoplasm"/>
    <property type="evidence" value="ECO:0007669"/>
    <property type="project" value="UniProtKB-SubCell"/>
</dbReference>
<dbReference type="GO" id="GO:0008897">
    <property type="term" value="F:holo-[acyl-carrier-protein] synthase activity"/>
    <property type="evidence" value="ECO:0007669"/>
    <property type="project" value="UniProtKB-UniRule"/>
</dbReference>
<dbReference type="GO" id="GO:0000287">
    <property type="term" value="F:magnesium ion binding"/>
    <property type="evidence" value="ECO:0007669"/>
    <property type="project" value="UniProtKB-UniRule"/>
</dbReference>
<dbReference type="GO" id="GO:0006633">
    <property type="term" value="P:fatty acid biosynthetic process"/>
    <property type="evidence" value="ECO:0007669"/>
    <property type="project" value="UniProtKB-UniRule"/>
</dbReference>
<dbReference type="FunFam" id="3.90.470.20:FF:000001">
    <property type="entry name" value="Holo-[acyl-carrier-protein] synthase"/>
    <property type="match status" value="1"/>
</dbReference>
<dbReference type="Gene3D" id="3.90.470.20">
    <property type="entry name" value="4'-phosphopantetheinyl transferase domain"/>
    <property type="match status" value="1"/>
</dbReference>
<dbReference type="HAMAP" id="MF_00101">
    <property type="entry name" value="AcpS"/>
    <property type="match status" value="1"/>
</dbReference>
<dbReference type="InterPro" id="IPR008278">
    <property type="entry name" value="4-PPantetheinyl_Trfase_dom"/>
</dbReference>
<dbReference type="InterPro" id="IPR037143">
    <property type="entry name" value="4-PPantetheinyl_Trfase_dom_sf"/>
</dbReference>
<dbReference type="InterPro" id="IPR002582">
    <property type="entry name" value="ACPS"/>
</dbReference>
<dbReference type="InterPro" id="IPR004568">
    <property type="entry name" value="Ppantetheine-prot_Trfase_dom"/>
</dbReference>
<dbReference type="NCBIfam" id="TIGR00516">
    <property type="entry name" value="acpS"/>
    <property type="match status" value="1"/>
</dbReference>
<dbReference type="NCBIfam" id="TIGR00556">
    <property type="entry name" value="pantethn_trn"/>
    <property type="match status" value="1"/>
</dbReference>
<dbReference type="Pfam" id="PF01648">
    <property type="entry name" value="ACPS"/>
    <property type="match status" value="1"/>
</dbReference>
<dbReference type="SUPFAM" id="SSF56214">
    <property type="entry name" value="4'-phosphopantetheinyl transferase"/>
    <property type="match status" value="1"/>
</dbReference>
<accession>Q8FF19</accession>
<name>ACPS_ECOL6</name>
<proteinExistence type="inferred from homology"/>
<sequence>MAILGLGTDIVEIARIEAVIARSGERLARRVLSDNEWEIWKTHHQPVRFLAKRFAVKEAAAKAFGTGIRNGLAFNQFEVFNDELGKPRLRLWGEALKLAEKLGVVNMHVTLADERHYACATVIIES</sequence>
<comment type="function">
    <text evidence="2">Transfers the 4'-phosphopantetheine moiety from coenzyme A to a Ser of acyl-carrier-protein.</text>
</comment>
<comment type="catalytic activity">
    <reaction evidence="2">
        <text>apo-[ACP] + CoA = holo-[ACP] + adenosine 3',5'-bisphosphate + H(+)</text>
        <dbReference type="Rhea" id="RHEA:12068"/>
        <dbReference type="Rhea" id="RHEA-COMP:9685"/>
        <dbReference type="Rhea" id="RHEA-COMP:9690"/>
        <dbReference type="ChEBI" id="CHEBI:15378"/>
        <dbReference type="ChEBI" id="CHEBI:29999"/>
        <dbReference type="ChEBI" id="CHEBI:57287"/>
        <dbReference type="ChEBI" id="CHEBI:58343"/>
        <dbReference type="ChEBI" id="CHEBI:64479"/>
        <dbReference type="EC" id="2.7.8.7"/>
    </reaction>
</comment>
<comment type="cofactor">
    <cofactor evidence="2">
        <name>Mg(2+)</name>
        <dbReference type="ChEBI" id="CHEBI:18420"/>
    </cofactor>
</comment>
<comment type="subcellular location">
    <subcellularLocation>
        <location evidence="2">Cytoplasm</location>
    </subcellularLocation>
</comment>
<comment type="similarity">
    <text evidence="2">Belongs to the P-Pant transferase superfamily. AcpS family.</text>
</comment>
<reference key="1">
    <citation type="journal article" date="2002" name="Proc. Natl. Acad. Sci. U.S.A.">
        <title>Extensive mosaic structure revealed by the complete genome sequence of uropathogenic Escherichia coli.</title>
        <authorList>
            <person name="Welch R.A."/>
            <person name="Burland V."/>
            <person name="Plunkett G. III"/>
            <person name="Redford P."/>
            <person name="Roesch P."/>
            <person name="Rasko D."/>
            <person name="Buckles E.L."/>
            <person name="Liou S.-R."/>
            <person name="Boutin A."/>
            <person name="Hackett J."/>
            <person name="Stroud D."/>
            <person name="Mayhew G.F."/>
            <person name="Rose D.J."/>
            <person name="Zhou S."/>
            <person name="Schwartz D.C."/>
            <person name="Perna N.T."/>
            <person name="Mobley H.L.T."/>
            <person name="Donnenberg M.S."/>
            <person name="Blattner F.R."/>
        </authorList>
    </citation>
    <scope>NUCLEOTIDE SEQUENCE [LARGE SCALE GENOMIC DNA]</scope>
    <source>
        <strain>CFT073 / ATCC 700928 / UPEC</strain>
    </source>
</reference>
<organism>
    <name type="scientific">Escherichia coli O6:H1 (strain CFT073 / ATCC 700928 / UPEC)</name>
    <dbReference type="NCBI Taxonomy" id="199310"/>
    <lineage>
        <taxon>Bacteria</taxon>
        <taxon>Pseudomonadati</taxon>
        <taxon>Pseudomonadota</taxon>
        <taxon>Gammaproteobacteria</taxon>
        <taxon>Enterobacterales</taxon>
        <taxon>Enterobacteriaceae</taxon>
        <taxon>Escherichia</taxon>
    </lineage>
</organism>
<evidence type="ECO:0000250" key="1"/>
<evidence type="ECO:0000255" key="2">
    <source>
        <dbReference type="HAMAP-Rule" id="MF_00101"/>
    </source>
</evidence>
<feature type="initiator methionine" description="Removed" evidence="1">
    <location>
        <position position="1"/>
    </location>
</feature>
<feature type="chain" id="PRO_0000175644" description="Holo-[acyl-carrier-protein] synthase">
    <location>
        <begin position="2"/>
        <end position="126"/>
    </location>
</feature>
<feature type="binding site" evidence="2">
    <location>
        <position position="9"/>
    </location>
    <ligand>
        <name>Mg(2+)</name>
        <dbReference type="ChEBI" id="CHEBI:18420"/>
    </ligand>
</feature>
<feature type="binding site" evidence="2">
    <location>
        <position position="58"/>
    </location>
    <ligand>
        <name>Mg(2+)</name>
        <dbReference type="ChEBI" id="CHEBI:18420"/>
    </ligand>
</feature>